<gene>
    <name evidence="2" type="primary">rpsL</name>
    <name type="ordered locus">ACP_1456</name>
</gene>
<reference key="1">
    <citation type="journal article" date="2009" name="Appl. Environ. Microbiol.">
        <title>Three genomes from the phylum Acidobacteria provide insight into the lifestyles of these microorganisms in soils.</title>
        <authorList>
            <person name="Ward N.L."/>
            <person name="Challacombe J.F."/>
            <person name="Janssen P.H."/>
            <person name="Henrissat B."/>
            <person name="Coutinho P.M."/>
            <person name="Wu M."/>
            <person name="Xie G."/>
            <person name="Haft D.H."/>
            <person name="Sait M."/>
            <person name="Badger J."/>
            <person name="Barabote R.D."/>
            <person name="Bradley B."/>
            <person name="Brettin T.S."/>
            <person name="Brinkac L.M."/>
            <person name="Bruce D."/>
            <person name="Creasy T."/>
            <person name="Daugherty S.C."/>
            <person name="Davidsen T.M."/>
            <person name="DeBoy R.T."/>
            <person name="Detter J.C."/>
            <person name="Dodson R.J."/>
            <person name="Durkin A.S."/>
            <person name="Ganapathy A."/>
            <person name="Gwinn-Giglio M."/>
            <person name="Han C.S."/>
            <person name="Khouri H."/>
            <person name="Kiss H."/>
            <person name="Kothari S.P."/>
            <person name="Madupu R."/>
            <person name="Nelson K.E."/>
            <person name="Nelson W.C."/>
            <person name="Paulsen I."/>
            <person name="Penn K."/>
            <person name="Ren Q."/>
            <person name="Rosovitz M.J."/>
            <person name="Selengut J.D."/>
            <person name="Shrivastava S."/>
            <person name="Sullivan S.A."/>
            <person name="Tapia R."/>
            <person name="Thompson L.S."/>
            <person name="Watkins K.L."/>
            <person name="Yang Q."/>
            <person name="Yu C."/>
            <person name="Zafar N."/>
            <person name="Zhou L."/>
            <person name="Kuske C.R."/>
        </authorList>
    </citation>
    <scope>NUCLEOTIDE SEQUENCE [LARGE SCALE GENOMIC DNA]</scope>
    <source>
        <strain>ATCC 51196 / DSM 11244 / BCRC 80197 / JCM 7670 / NBRC 15755 / NCIMB 13165 / 161</strain>
    </source>
</reference>
<keyword id="KW-0488">Methylation</keyword>
<keyword id="KW-1185">Reference proteome</keyword>
<keyword id="KW-0687">Ribonucleoprotein</keyword>
<keyword id="KW-0689">Ribosomal protein</keyword>
<keyword id="KW-0694">RNA-binding</keyword>
<keyword id="KW-0699">rRNA-binding</keyword>
<keyword id="KW-0820">tRNA-binding</keyword>
<proteinExistence type="inferred from homology"/>
<evidence type="ECO:0000250" key="1"/>
<evidence type="ECO:0000255" key="2">
    <source>
        <dbReference type="HAMAP-Rule" id="MF_00403"/>
    </source>
</evidence>
<evidence type="ECO:0000256" key="3">
    <source>
        <dbReference type="SAM" id="MobiDB-lite"/>
    </source>
</evidence>
<evidence type="ECO:0000305" key="4"/>
<feature type="chain" id="PRO_1000194102" description="Small ribosomal subunit protein uS12">
    <location>
        <begin position="1"/>
        <end position="131"/>
    </location>
</feature>
<feature type="region of interest" description="Disordered" evidence="3">
    <location>
        <begin position="1"/>
        <end position="32"/>
    </location>
</feature>
<feature type="region of interest" description="Disordered" evidence="3">
    <location>
        <begin position="110"/>
        <end position="131"/>
    </location>
</feature>
<feature type="compositionally biased region" description="Basic residues" evidence="3">
    <location>
        <begin position="111"/>
        <end position="131"/>
    </location>
</feature>
<feature type="modified residue" description="3-methylthioaspartic acid" evidence="1">
    <location>
        <position position="89"/>
    </location>
</feature>
<protein>
    <recommendedName>
        <fullName evidence="2">Small ribosomal subunit protein uS12</fullName>
    </recommendedName>
    <alternativeName>
        <fullName evidence="4">30S ribosomal protein S12</fullName>
    </alternativeName>
</protein>
<accession>C1F647</accession>
<sequence length="131" mass="14230">MPTFSQLVRKGRTAPRYKTASPALQGSPQRRGVCTRVYTQTPKKPNSALRKVARVRLTNGIEVTTYIPGIGHNLQEHSIVLIRGGRVKDLPGVRYHVVRGTLDSVGVANRKQGRSKYGAKRAKGGAAAGKK</sequence>
<comment type="function">
    <text evidence="2">With S4 and S5 plays an important role in translational accuracy.</text>
</comment>
<comment type="function">
    <text evidence="2">Interacts with and stabilizes bases of the 16S rRNA that are involved in tRNA selection in the A site and with the mRNA backbone. Located at the interface of the 30S and 50S subunits, it traverses the body of the 30S subunit contacting proteins on the other side and probably holding the rRNA structure together. The combined cluster of proteins S8, S12 and S17 appears to hold together the shoulder and platform of the 30S subunit.</text>
</comment>
<comment type="subunit">
    <text evidence="2">Part of the 30S ribosomal subunit. Contacts proteins S8 and S17. May interact with IF1 in the 30S initiation complex.</text>
</comment>
<comment type="similarity">
    <text evidence="2">Belongs to the universal ribosomal protein uS12 family.</text>
</comment>
<dbReference type="EMBL" id="CP001472">
    <property type="protein sequence ID" value="ACO34352.1"/>
    <property type="molecule type" value="Genomic_DNA"/>
</dbReference>
<dbReference type="RefSeq" id="WP_015896589.1">
    <property type="nucleotide sequence ID" value="NC_012483.1"/>
</dbReference>
<dbReference type="SMR" id="C1F647"/>
<dbReference type="FunCoup" id="C1F647">
    <property type="interactions" value="549"/>
</dbReference>
<dbReference type="STRING" id="240015.ACP_1456"/>
<dbReference type="KEGG" id="aca:ACP_1456"/>
<dbReference type="eggNOG" id="COG0048">
    <property type="taxonomic scope" value="Bacteria"/>
</dbReference>
<dbReference type="HOGENOM" id="CLU_104295_1_2_0"/>
<dbReference type="InParanoid" id="C1F647"/>
<dbReference type="OrthoDB" id="9802366at2"/>
<dbReference type="Proteomes" id="UP000002207">
    <property type="component" value="Chromosome"/>
</dbReference>
<dbReference type="GO" id="GO:0015935">
    <property type="term" value="C:small ribosomal subunit"/>
    <property type="evidence" value="ECO:0007669"/>
    <property type="project" value="InterPro"/>
</dbReference>
<dbReference type="GO" id="GO:0019843">
    <property type="term" value="F:rRNA binding"/>
    <property type="evidence" value="ECO:0007669"/>
    <property type="project" value="UniProtKB-UniRule"/>
</dbReference>
<dbReference type="GO" id="GO:0003735">
    <property type="term" value="F:structural constituent of ribosome"/>
    <property type="evidence" value="ECO:0007669"/>
    <property type="project" value="InterPro"/>
</dbReference>
<dbReference type="GO" id="GO:0000049">
    <property type="term" value="F:tRNA binding"/>
    <property type="evidence" value="ECO:0007669"/>
    <property type="project" value="UniProtKB-UniRule"/>
</dbReference>
<dbReference type="GO" id="GO:0006412">
    <property type="term" value="P:translation"/>
    <property type="evidence" value="ECO:0007669"/>
    <property type="project" value="UniProtKB-UniRule"/>
</dbReference>
<dbReference type="CDD" id="cd03368">
    <property type="entry name" value="Ribosomal_S12"/>
    <property type="match status" value="1"/>
</dbReference>
<dbReference type="FunFam" id="2.40.50.140:FF:000001">
    <property type="entry name" value="30S ribosomal protein S12"/>
    <property type="match status" value="1"/>
</dbReference>
<dbReference type="Gene3D" id="2.40.50.140">
    <property type="entry name" value="Nucleic acid-binding proteins"/>
    <property type="match status" value="1"/>
</dbReference>
<dbReference type="HAMAP" id="MF_00403_B">
    <property type="entry name" value="Ribosomal_uS12_B"/>
    <property type="match status" value="1"/>
</dbReference>
<dbReference type="InterPro" id="IPR012340">
    <property type="entry name" value="NA-bd_OB-fold"/>
</dbReference>
<dbReference type="InterPro" id="IPR006032">
    <property type="entry name" value="Ribosomal_uS12"/>
</dbReference>
<dbReference type="InterPro" id="IPR005679">
    <property type="entry name" value="Ribosomal_uS12_bac"/>
</dbReference>
<dbReference type="NCBIfam" id="TIGR00981">
    <property type="entry name" value="rpsL_bact"/>
    <property type="match status" value="1"/>
</dbReference>
<dbReference type="PANTHER" id="PTHR11652">
    <property type="entry name" value="30S RIBOSOMAL PROTEIN S12 FAMILY MEMBER"/>
    <property type="match status" value="1"/>
</dbReference>
<dbReference type="Pfam" id="PF00164">
    <property type="entry name" value="Ribosom_S12_S23"/>
    <property type="match status" value="1"/>
</dbReference>
<dbReference type="PIRSF" id="PIRSF002133">
    <property type="entry name" value="Ribosomal_S12/S23"/>
    <property type="match status" value="1"/>
</dbReference>
<dbReference type="PRINTS" id="PR01034">
    <property type="entry name" value="RIBOSOMALS12"/>
</dbReference>
<dbReference type="SUPFAM" id="SSF50249">
    <property type="entry name" value="Nucleic acid-binding proteins"/>
    <property type="match status" value="1"/>
</dbReference>
<dbReference type="PROSITE" id="PS00055">
    <property type="entry name" value="RIBOSOMAL_S12"/>
    <property type="match status" value="1"/>
</dbReference>
<organism>
    <name type="scientific">Acidobacterium capsulatum (strain ATCC 51196 / DSM 11244 / BCRC 80197 / JCM 7670 / NBRC 15755 / NCIMB 13165 / 161)</name>
    <dbReference type="NCBI Taxonomy" id="240015"/>
    <lineage>
        <taxon>Bacteria</taxon>
        <taxon>Pseudomonadati</taxon>
        <taxon>Acidobacteriota</taxon>
        <taxon>Terriglobia</taxon>
        <taxon>Terriglobales</taxon>
        <taxon>Acidobacteriaceae</taxon>
        <taxon>Acidobacterium</taxon>
    </lineage>
</organism>
<name>RS12_ACIC5</name>